<reference key="1">
    <citation type="journal article" date="2006" name="Science">
        <title>A small microbial genome: the end of a long symbiotic relationship?</title>
        <authorList>
            <person name="Perez-Brocal V."/>
            <person name="Gil R."/>
            <person name="Ramos S."/>
            <person name="Lamelas A."/>
            <person name="Postigo M."/>
            <person name="Michelena J.M."/>
            <person name="Silva F.J."/>
            <person name="Moya A."/>
            <person name="Latorre A."/>
        </authorList>
    </citation>
    <scope>NUCLEOTIDE SEQUENCE [LARGE SCALE GENOMIC DNA]</scope>
    <source>
        <strain>Cc</strain>
    </source>
</reference>
<proteinExistence type="inferred from homology"/>
<evidence type="ECO:0000255" key="1">
    <source>
        <dbReference type="HAMAP-Rule" id="MF_00014"/>
    </source>
</evidence>
<gene>
    <name evidence="1" type="primary">rimM</name>
    <name type="ordered locus">BCc_247</name>
</gene>
<keyword id="KW-0143">Chaperone</keyword>
<keyword id="KW-0963">Cytoplasm</keyword>
<keyword id="KW-1185">Reference proteome</keyword>
<keyword id="KW-0690">Ribosome biogenesis</keyword>
<keyword id="KW-0698">rRNA processing</keyword>
<name>RIMM_BUCCC</name>
<sequence>MITIGKIGKPYGILGWFHMFSYTEKKNNIFNYFPWKLEKSNILLYKNNIIHYKTHTDHFLIKIKDINNRTQTLNFIKQNILIKNFQLPKLKNKEYYWNDIFSCYIFDLKKKKIGSIKNIIDNKFYCTLEILYKKKKIYIPFIQPNFIKKIDIKKKIIVIDLTNLNNQLI</sequence>
<feature type="chain" id="PRO_0000351726" description="Ribosome maturation factor RimM">
    <location>
        <begin position="1"/>
        <end position="169"/>
    </location>
</feature>
<feature type="domain" description="PRC barrel" evidence="1">
    <location>
        <begin position="92"/>
        <end position="166"/>
    </location>
</feature>
<comment type="function">
    <text evidence="1">An accessory protein needed during the final step in the assembly of 30S ribosomal subunit, possibly for assembly of the head region. Essential for efficient processing of 16S rRNA. May be needed both before and after RbfA during the maturation of 16S rRNA. It has affinity for free ribosomal 30S subunits but not for 70S ribosomes.</text>
</comment>
<comment type="subunit">
    <text evidence="1">Binds ribosomal protein uS19.</text>
</comment>
<comment type="subcellular location">
    <subcellularLocation>
        <location evidence="1">Cytoplasm</location>
    </subcellularLocation>
</comment>
<comment type="domain">
    <text evidence="1">The PRC barrel domain binds ribosomal protein uS19.</text>
</comment>
<comment type="similarity">
    <text evidence="1">Belongs to the RimM family.</text>
</comment>
<accession>Q057I4</accession>
<dbReference type="EMBL" id="CP000263">
    <property type="protein sequence ID" value="ABJ90715.1"/>
    <property type="molecule type" value="Genomic_DNA"/>
</dbReference>
<dbReference type="RefSeq" id="WP_011672634.1">
    <property type="nucleotide sequence ID" value="NC_008513.1"/>
</dbReference>
<dbReference type="SMR" id="Q057I4"/>
<dbReference type="STRING" id="372461.BCc_247"/>
<dbReference type="KEGG" id="bcc:BCc_247"/>
<dbReference type="eggNOG" id="COG0806">
    <property type="taxonomic scope" value="Bacteria"/>
</dbReference>
<dbReference type="HOGENOM" id="CLU_077636_1_0_6"/>
<dbReference type="OrthoDB" id="9783509at2"/>
<dbReference type="Proteomes" id="UP000000669">
    <property type="component" value="Chromosome"/>
</dbReference>
<dbReference type="GO" id="GO:0005737">
    <property type="term" value="C:cytoplasm"/>
    <property type="evidence" value="ECO:0007669"/>
    <property type="project" value="UniProtKB-SubCell"/>
</dbReference>
<dbReference type="GO" id="GO:0005840">
    <property type="term" value="C:ribosome"/>
    <property type="evidence" value="ECO:0007669"/>
    <property type="project" value="InterPro"/>
</dbReference>
<dbReference type="GO" id="GO:0043022">
    <property type="term" value="F:ribosome binding"/>
    <property type="evidence" value="ECO:0007669"/>
    <property type="project" value="InterPro"/>
</dbReference>
<dbReference type="GO" id="GO:0042274">
    <property type="term" value="P:ribosomal small subunit biogenesis"/>
    <property type="evidence" value="ECO:0007669"/>
    <property type="project" value="UniProtKB-UniRule"/>
</dbReference>
<dbReference type="GO" id="GO:0006364">
    <property type="term" value="P:rRNA processing"/>
    <property type="evidence" value="ECO:0007669"/>
    <property type="project" value="UniProtKB-UniRule"/>
</dbReference>
<dbReference type="Gene3D" id="2.30.30.240">
    <property type="entry name" value="PRC-barrel domain"/>
    <property type="match status" value="1"/>
</dbReference>
<dbReference type="Gene3D" id="2.40.30.60">
    <property type="entry name" value="RimM"/>
    <property type="match status" value="1"/>
</dbReference>
<dbReference type="HAMAP" id="MF_00014">
    <property type="entry name" value="Ribosome_mat_RimM"/>
    <property type="match status" value="1"/>
</dbReference>
<dbReference type="InterPro" id="IPR011033">
    <property type="entry name" value="PRC_barrel-like_sf"/>
</dbReference>
<dbReference type="InterPro" id="IPR056792">
    <property type="entry name" value="PRC_RimM"/>
</dbReference>
<dbReference type="InterPro" id="IPR011961">
    <property type="entry name" value="RimM"/>
</dbReference>
<dbReference type="InterPro" id="IPR002676">
    <property type="entry name" value="RimM_N"/>
</dbReference>
<dbReference type="InterPro" id="IPR036976">
    <property type="entry name" value="RimM_N_sf"/>
</dbReference>
<dbReference type="InterPro" id="IPR009000">
    <property type="entry name" value="Transl_B-barrel_sf"/>
</dbReference>
<dbReference type="NCBIfam" id="TIGR02273">
    <property type="entry name" value="16S_RimM"/>
    <property type="match status" value="1"/>
</dbReference>
<dbReference type="PANTHER" id="PTHR33692">
    <property type="entry name" value="RIBOSOME MATURATION FACTOR RIMM"/>
    <property type="match status" value="1"/>
</dbReference>
<dbReference type="PANTHER" id="PTHR33692:SF1">
    <property type="entry name" value="RIBOSOME MATURATION FACTOR RIMM"/>
    <property type="match status" value="1"/>
</dbReference>
<dbReference type="Pfam" id="PF24986">
    <property type="entry name" value="PRC_RimM"/>
    <property type="match status" value="1"/>
</dbReference>
<dbReference type="Pfam" id="PF01782">
    <property type="entry name" value="RimM"/>
    <property type="match status" value="1"/>
</dbReference>
<dbReference type="SUPFAM" id="SSF50346">
    <property type="entry name" value="PRC-barrel domain"/>
    <property type="match status" value="1"/>
</dbReference>
<dbReference type="SUPFAM" id="SSF50447">
    <property type="entry name" value="Translation proteins"/>
    <property type="match status" value="1"/>
</dbReference>
<protein>
    <recommendedName>
        <fullName evidence="1">Ribosome maturation factor RimM</fullName>
    </recommendedName>
</protein>
<organism>
    <name type="scientific">Buchnera aphidicola subsp. Cinara cedri (strain Cc)</name>
    <dbReference type="NCBI Taxonomy" id="372461"/>
    <lineage>
        <taxon>Bacteria</taxon>
        <taxon>Pseudomonadati</taxon>
        <taxon>Pseudomonadota</taxon>
        <taxon>Gammaproteobacteria</taxon>
        <taxon>Enterobacterales</taxon>
        <taxon>Erwiniaceae</taxon>
        <taxon>Buchnera</taxon>
    </lineage>
</organism>